<protein>
    <recommendedName>
        <fullName evidence="1">Large ribosomal subunit protein uL11</fullName>
    </recommendedName>
    <alternativeName>
        <fullName evidence="2">50S ribosomal protein L11</fullName>
    </alternativeName>
</protein>
<evidence type="ECO:0000255" key="1">
    <source>
        <dbReference type="HAMAP-Rule" id="MF_00736"/>
    </source>
</evidence>
<evidence type="ECO:0000305" key="2"/>
<proteinExistence type="inferred from homology"/>
<name>RL11_PAEAT</name>
<sequence length="143" mass="14894">MAPKKKVTGLIKLQIQAGAANPAPPIGPALGQHGVNIMEFCKAYNAATESQRGNVIPVEITVYEDRSFTFITKTPPAAELIKKAAGVAKGSATPHTVKVAKLTQAQVEEIASTKMEDLNANDIKAAALIIAGTARSMGITVEG</sequence>
<keyword id="KW-0488">Methylation</keyword>
<keyword id="KW-0687">Ribonucleoprotein</keyword>
<keyword id="KW-0689">Ribosomal protein</keyword>
<keyword id="KW-0694">RNA-binding</keyword>
<keyword id="KW-0699">rRNA-binding</keyword>
<organism>
    <name type="scientific">Paenarthrobacter aurescens (strain TC1)</name>
    <dbReference type="NCBI Taxonomy" id="290340"/>
    <lineage>
        <taxon>Bacteria</taxon>
        <taxon>Bacillati</taxon>
        <taxon>Actinomycetota</taxon>
        <taxon>Actinomycetes</taxon>
        <taxon>Micrococcales</taxon>
        <taxon>Micrococcaceae</taxon>
        <taxon>Paenarthrobacter</taxon>
    </lineage>
</organism>
<feature type="chain" id="PRO_1000046138" description="Large ribosomal subunit protein uL11">
    <location>
        <begin position="1"/>
        <end position="143"/>
    </location>
</feature>
<reference key="1">
    <citation type="journal article" date="2006" name="PLoS Genet.">
        <title>Secrets of soil survival revealed by the genome sequence of Arthrobacter aurescens TC1.</title>
        <authorList>
            <person name="Mongodin E.F."/>
            <person name="Shapir N."/>
            <person name="Daugherty S.C."/>
            <person name="DeBoy R.T."/>
            <person name="Emerson J.B."/>
            <person name="Shvartzbeyn A."/>
            <person name="Radune D."/>
            <person name="Vamathevan J."/>
            <person name="Riggs F."/>
            <person name="Grinberg V."/>
            <person name="Khouri H.M."/>
            <person name="Wackett L.P."/>
            <person name="Nelson K.E."/>
            <person name="Sadowsky M.J."/>
        </authorList>
    </citation>
    <scope>NUCLEOTIDE SEQUENCE [LARGE SCALE GENOMIC DNA]</scope>
    <source>
        <strain>TC1</strain>
    </source>
</reference>
<comment type="function">
    <text evidence="1">Forms part of the ribosomal stalk which helps the ribosome interact with GTP-bound translation factors.</text>
</comment>
<comment type="subunit">
    <text evidence="1">Part of the ribosomal stalk of the 50S ribosomal subunit. Interacts with L10 and the large rRNA to form the base of the stalk. L10 forms an elongated spine to which L12 dimers bind in a sequential fashion forming a multimeric L10(L12)X complex.</text>
</comment>
<comment type="PTM">
    <text evidence="1">One or more lysine residues are methylated.</text>
</comment>
<comment type="similarity">
    <text evidence="1">Belongs to the universal ribosomal protein uL11 family.</text>
</comment>
<dbReference type="EMBL" id="CP000474">
    <property type="protein sequence ID" value="ABM09792.1"/>
    <property type="molecule type" value="Genomic_DNA"/>
</dbReference>
<dbReference type="RefSeq" id="WP_011775609.1">
    <property type="nucleotide sequence ID" value="NC_008711.1"/>
</dbReference>
<dbReference type="SMR" id="A1R8W2"/>
<dbReference type="STRING" id="290340.AAur_2965"/>
<dbReference type="GeneID" id="97301810"/>
<dbReference type="KEGG" id="aau:AAur_2965"/>
<dbReference type="eggNOG" id="COG0080">
    <property type="taxonomic scope" value="Bacteria"/>
</dbReference>
<dbReference type="HOGENOM" id="CLU_074237_2_1_11"/>
<dbReference type="OrthoDB" id="9802408at2"/>
<dbReference type="Proteomes" id="UP000000637">
    <property type="component" value="Chromosome"/>
</dbReference>
<dbReference type="GO" id="GO:0022625">
    <property type="term" value="C:cytosolic large ribosomal subunit"/>
    <property type="evidence" value="ECO:0007669"/>
    <property type="project" value="TreeGrafter"/>
</dbReference>
<dbReference type="GO" id="GO:0070180">
    <property type="term" value="F:large ribosomal subunit rRNA binding"/>
    <property type="evidence" value="ECO:0007669"/>
    <property type="project" value="UniProtKB-UniRule"/>
</dbReference>
<dbReference type="GO" id="GO:0003735">
    <property type="term" value="F:structural constituent of ribosome"/>
    <property type="evidence" value="ECO:0007669"/>
    <property type="project" value="InterPro"/>
</dbReference>
<dbReference type="GO" id="GO:0006412">
    <property type="term" value="P:translation"/>
    <property type="evidence" value="ECO:0007669"/>
    <property type="project" value="UniProtKB-UniRule"/>
</dbReference>
<dbReference type="CDD" id="cd00349">
    <property type="entry name" value="Ribosomal_L11"/>
    <property type="match status" value="1"/>
</dbReference>
<dbReference type="FunFam" id="1.10.10.250:FF:000001">
    <property type="entry name" value="50S ribosomal protein L11"/>
    <property type="match status" value="1"/>
</dbReference>
<dbReference type="FunFam" id="3.30.1550.10:FF:000001">
    <property type="entry name" value="50S ribosomal protein L11"/>
    <property type="match status" value="1"/>
</dbReference>
<dbReference type="Gene3D" id="1.10.10.250">
    <property type="entry name" value="Ribosomal protein L11, C-terminal domain"/>
    <property type="match status" value="1"/>
</dbReference>
<dbReference type="Gene3D" id="3.30.1550.10">
    <property type="entry name" value="Ribosomal protein L11/L12, N-terminal domain"/>
    <property type="match status" value="1"/>
</dbReference>
<dbReference type="HAMAP" id="MF_00736">
    <property type="entry name" value="Ribosomal_uL11"/>
    <property type="match status" value="1"/>
</dbReference>
<dbReference type="InterPro" id="IPR000911">
    <property type="entry name" value="Ribosomal_uL11"/>
</dbReference>
<dbReference type="InterPro" id="IPR006519">
    <property type="entry name" value="Ribosomal_uL11_bac-typ"/>
</dbReference>
<dbReference type="InterPro" id="IPR020783">
    <property type="entry name" value="Ribosomal_uL11_C"/>
</dbReference>
<dbReference type="InterPro" id="IPR036769">
    <property type="entry name" value="Ribosomal_uL11_C_sf"/>
</dbReference>
<dbReference type="InterPro" id="IPR020784">
    <property type="entry name" value="Ribosomal_uL11_N"/>
</dbReference>
<dbReference type="InterPro" id="IPR036796">
    <property type="entry name" value="Ribosomal_uL11_N_sf"/>
</dbReference>
<dbReference type="NCBIfam" id="TIGR01632">
    <property type="entry name" value="L11_bact"/>
    <property type="match status" value="1"/>
</dbReference>
<dbReference type="PANTHER" id="PTHR11661">
    <property type="entry name" value="60S RIBOSOMAL PROTEIN L12"/>
    <property type="match status" value="1"/>
</dbReference>
<dbReference type="PANTHER" id="PTHR11661:SF1">
    <property type="entry name" value="LARGE RIBOSOMAL SUBUNIT PROTEIN UL11M"/>
    <property type="match status" value="1"/>
</dbReference>
<dbReference type="Pfam" id="PF00298">
    <property type="entry name" value="Ribosomal_L11"/>
    <property type="match status" value="1"/>
</dbReference>
<dbReference type="Pfam" id="PF03946">
    <property type="entry name" value="Ribosomal_L11_N"/>
    <property type="match status" value="1"/>
</dbReference>
<dbReference type="SMART" id="SM00649">
    <property type="entry name" value="RL11"/>
    <property type="match status" value="1"/>
</dbReference>
<dbReference type="SUPFAM" id="SSF54747">
    <property type="entry name" value="Ribosomal L11/L12e N-terminal domain"/>
    <property type="match status" value="1"/>
</dbReference>
<dbReference type="SUPFAM" id="SSF46906">
    <property type="entry name" value="Ribosomal protein L11, C-terminal domain"/>
    <property type="match status" value="1"/>
</dbReference>
<gene>
    <name evidence="1" type="primary">rplK</name>
    <name type="ordered locus">AAur_2965</name>
</gene>
<accession>A1R8W2</accession>